<dbReference type="EC" id="1.14.14.-" evidence="3"/>
<dbReference type="EMBL" id="KT390179">
    <property type="protein sequence ID" value="ALG05141.1"/>
    <property type="molecule type" value="mRNA"/>
</dbReference>
<dbReference type="SMR" id="A0A0N9HT29"/>
<dbReference type="UniPathway" id="UPA00711"/>
<dbReference type="GO" id="GO:0016020">
    <property type="term" value="C:membrane"/>
    <property type="evidence" value="ECO:0007669"/>
    <property type="project" value="UniProtKB-SubCell"/>
</dbReference>
<dbReference type="GO" id="GO:0020037">
    <property type="term" value="F:heme binding"/>
    <property type="evidence" value="ECO:0007669"/>
    <property type="project" value="InterPro"/>
</dbReference>
<dbReference type="GO" id="GO:0005506">
    <property type="term" value="F:iron ion binding"/>
    <property type="evidence" value="ECO:0007669"/>
    <property type="project" value="InterPro"/>
</dbReference>
<dbReference type="GO" id="GO:0004497">
    <property type="term" value="F:monooxygenase activity"/>
    <property type="evidence" value="ECO:0007669"/>
    <property type="project" value="UniProtKB-KW"/>
</dbReference>
<dbReference type="GO" id="GO:0016705">
    <property type="term" value="F:oxidoreductase activity, acting on paired donors, with incorporation or reduction of molecular oxygen"/>
    <property type="evidence" value="ECO:0000314"/>
    <property type="project" value="UniProtKB"/>
</dbReference>
<dbReference type="GO" id="GO:0009699">
    <property type="term" value="P:phenylpropanoid biosynthetic process"/>
    <property type="evidence" value="ECO:0000314"/>
    <property type="project" value="UniProtKB"/>
</dbReference>
<dbReference type="CDD" id="cd11072">
    <property type="entry name" value="CYP71-like"/>
    <property type="match status" value="1"/>
</dbReference>
<dbReference type="FunFam" id="1.10.630.10:FF:000008">
    <property type="entry name" value="Cytochrome P450 71D8"/>
    <property type="match status" value="1"/>
</dbReference>
<dbReference type="Gene3D" id="1.10.630.10">
    <property type="entry name" value="Cytochrome P450"/>
    <property type="match status" value="1"/>
</dbReference>
<dbReference type="InterPro" id="IPR052306">
    <property type="entry name" value="CYP450_71D"/>
</dbReference>
<dbReference type="InterPro" id="IPR001128">
    <property type="entry name" value="Cyt_P450"/>
</dbReference>
<dbReference type="InterPro" id="IPR017972">
    <property type="entry name" value="Cyt_P450_CS"/>
</dbReference>
<dbReference type="InterPro" id="IPR002401">
    <property type="entry name" value="Cyt_P450_E_grp-I"/>
</dbReference>
<dbReference type="InterPro" id="IPR036396">
    <property type="entry name" value="Cyt_P450_sf"/>
</dbReference>
<dbReference type="PANTHER" id="PTHR47953:SF19">
    <property type="entry name" value="OS06G0641600 PROTEIN"/>
    <property type="match status" value="1"/>
</dbReference>
<dbReference type="PANTHER" id="PTHR47953">
    <property type="entry name" value="OS08G0105600 PROTEIN"/>
    <property type="match status" value="1"/>
</dbReference>
<dbReference type="Pfam" id="PF00067">
    <property type="entry name" value="p450"/>
    <property type="match status" value="1"/>
</dbReference>
<dbReference type="PRINTS" id="PR00463">
    <property type="entry name" value="EP450I"/>
</dbReference>
<dbReference type="PRINTS" id="PR00385">
    <property type="entry name" value="P450"/>
</dbReference>
<dbReference type="SUPFAM" id="SSF48264">
    <property type="entry name" value="Cytochrome P450"/>
    <property type="match status" value="1"/>
</dbReference>
<dbReference type="PROSITE" id="PS00086">
    <property type="entry name" value="CYTOCHROME_P450"/>
    <property type="match status" value="1"/>
</dbReference>
<evidence type="ECO:0000250" key="1">
    <source>
        <dbReference type="UniProtKB" id="Q96242"/>
    </source>
</evidence>
<evidence type="ECO:0000255" key="2"/>
<evidence type="ECO:0000269" key="3">
    <source>
    </source>
</evidence>
<evidence type="ECO:0000303" key="4">
    <source>
    </source>
</evidence>
<evidence type="ECO:0000305" key="5"/>
<evidence type="ECO:0000305" key="6">
    <source>
    </source>
</evidence>
<comment type="function">
    <text evidence="3">Cytochrome P450 involved in the biosynthesis of etoposide, a chemotherapeutic compound of the topoisomerase inhibitor family (PubMed:26359402). Catalyzes the conversion of deoxypodophyllotoxin to desmethyl-deoxypodophyllotoxin (PubMed:26359402).</text>
</comment>
<comment type="catalytic activity">
    <reaction evidence="3">
        <text>(-)-deoxypodophyllotoxin + reduced [NADPH--hemoprotein reductase] + O2 = (-)-4'-desmethyl-deoxypodophyllotoxin + formaldehyde + oxidized [NADPH--hemoprotein reductase] + H2O + H(+)</text>
        <dbReference type="Rhea" id="RHEA:65572"/>
        <dbReference type="Rhea" id="RHEA-COMP:11964"/>
        <dbReference type="Rhea" id="RHEA-COMP:11965"/>
        <dbReference type="ChEBI" id="CHEBI:1729"/>
        <dbReference type="ChEBI" id="CHEBI:4429"/>
        <dbReference type="ChEBI" id="CHEBI:15377"/>
        <dbReference type="ChEBI" id="CHEBI:15378"/>
        <dbReference type="ChEBI" id="CHEBI:15379"/>
        <dbReference type="ChEBI" id="CHEBI:16842"/>
        <dbReference type="ChEBI" id="CHEBI:57618"/>
        <dbReference type="ChEBI" id="CHEBI:58210"/>
    </reaction>
    <physiologicalReaction direction="left-to-right" evidence="3">
        <dbReference type="Rhea" id="RHEA:65573"/>
    </physiologicalReaction>
</comment>
<comment type="cofactor">
    <cofactor evidence="1">
        <name>heme</name>
        <dbReference type="ChEBI" id="CHEBI:30413"/>
    </cofactor>
</comment>
<comment type="pathway">
    <text evidence="3">Aromatic compound metabolism; phenylpropanoid biosynthesis.</text>
</comment>
<comment type="subcellular location">
    <subcellularLocation>
        <location evidence="2">Membrane</location>
        <topology evidence="2">Single-pass membrane protein</topology>
    </subcellularLocation>
</comment>
<comment type="tissue specificity">
    <text evidence="3">Rhizome-specific expression.</text>
</comment>
<comment type="biotechnology">
    <text evidence="6">Combinatorially expression of Sinopodophyllum hexandrum (mayapple) genes of the podophyllotoxin pathway (e.g. DIR, PLR, SDH, CYP719A23, OMT3, CYP71CU1, OMT1, 2-ODD, CYP71BE54 and CYP82D61) in Nicotiana benthamiana (tobacco) results in the production of the chemotherapeutic compound etoposide.</text>
</comment>
<comment type="similarity">
    <text evidence="5">Belongs to the cytochrome P450 family.</text>
</comment>
<organism>
    <name type="scientific">Sinopodophyllum hexandrum</name>
    <name type="common">Himalayan may apple</name>
    <name type="synonym">Podophyllum hexandrum</name>
    <dbReference type="NCBI Taxonomy" id="93608"/>
    <lineage>
        <taxon>Eukaryota</taxon>
        <taxon>Viridiplantae</taxon>
        <taxon>Streptophyta</taxon>
        <taxon>Embryophyta</taxon>
        <taxon>Tracheophyta</taxon>
        <taxon>Spermatophyta</taxon>
        <taxon>Magnoliopsida</taxon>
        <taxon>Ranunculales</taxon>
        <taxon>Berberidaceae</taxon>
        <taxon>Podophylloideae</taxon>
        <taxon>Podophylleae</taxon>
        <taxon>Sinopodophyllum</taxon>
    </lineage>
</organism>
<protein>
    <recommendedName>
        <fullName evidence="4">Desmethyl-deoxy-podophyllotoxin synthase</fullName>
        <ecNumber evidence="3">1.14.14.-</ecNumber>
    </recommendedName>
    <alternativeName>
        <fullName evidence="4">Cytochrome P450 family 71 subfamily BE polypeptide 54</fullName>
    </alternativeName>
</protein>
<gene>
    <name evidence="4" type="primary">CYP71BE54</name>
</gene>
<name>C71BE_SINHE</name>
<feature type="chain" id="PRO_5006035457" description="Desmethyl-deoxy-podophyllotoxin synthase">
    <location>
        <begin position="1"/>
        <end position="507"/>
    </location>
</feature>
<feature type="transmembrane region" description="Helical" evidence="2">
    <location>
        <begin position="1"/>
        <end position="21"/>
    </location>
</feature>
<feature type="binding site" description="axial binding residue" evidence="1">
    <location>
        <position position="440"/>
    </location>
    <ligand>
        <name>heme</name>
        <dbReference type="ChEBI" id="CHEBI:30413"/>
    </ligand>
    <ligandPart>
        <name>Fe</name>
        <dbReference type="ChEBI" id="CHEBI:18248"/>
    </ligandPart>
</feature>
<sequence>MEFLSFPLSSALLIILLFMLVKKAIQNKNSKLPPGPRKLPVIGSLHHLIGDGLPHHALRNLAKKHGPLMHLQLGENSTLVVSSSKMARAIMSTHDLMFANRTVQFATDILLYGGKGIGLAPYGDYWRQIRKICVLELLSAKRVQSFQTVREEEISNLIRSISAESSKVNFSEMITSLTNDIIARAAFGEKCKDKHAFLSLIEEGIQLAGGFDIAGLFPSLKLLHVITGKKRQLERVHNELDRILVDIIKENKEKRRASKLNEDKYEENLVDVLVRVQENTQLEVPLANDNLKAVILDIFVAGSETSSTTIEWAMSEMLKNPKVMKKAQAEVRRVFSGNKKINETEIQELSYLKLVLKETLRLHAPAPLLIPRECRESCEIDGYEIPKKTMVMVNAWAIGRDPENWSNGDRFEPERFDGISVDYKGTNFEYIPFGAGRRICPGMLFGMANVEVPLARLLYHFDWELPNGIKPEELDMDETFGTTVRRKNHLYLIPTVVHELERSTTKE</sequence>
<accession>A0A0N9HT29</accession>
<keyword id="KW-0349">Heme</keyword>
<keyword id="KW-0408">Iron</keyword>
<keyword id="KW-0472">Membrane</keyword>
<keyword id="KW-0479">Metal-binding</keyword>
<keyword id="KW-0503">Monooxygenase</keyword>
<keyword id="KW-0560">Oxidoreductase</keyword>
<keyword id="KW-0812">Transmembrane</keyword>
<keyword id="KW-1133">Transmembrane helix</keyword>
<reference key="1">
    <citation type="journal article" date="2015" name="Science">
        <title>Six enzymes from mayapple that complete the biosynthetic pathway to the etoposide aglycone.</title>
        <authorList>
            <person name="Lau W."/>
            <person name="Sattely E.S."/>
        </authorList>
    </citation>
    <scope>NUCLEOTIDE SEQUENCE [MRNA]</scope>
    <scope>FUNCTION</scope>
    <scope>CATALYTIC ACTIVITY</scope>
    <scope>BIOTECHNOLOGY</scope>
    <scope>TISSUE SPECIFICITY</scope>
    <scope>PATHWAY</scope>
</reference>
<proteinExistence type="evidence at protein level"/>